<keyword id="KW-0256">Endoplasmic reticulum</keyword>
<keyword id="KW-0325">Glycoprotein</keyword>
<keyword id="KW-0378">Hydrolase</keyword>
<keyword id="KW-0472">Membrane</keyword>
<keyword id="KW-0645">Protease</keyword>
<keyword id="KW-1185">Reference proteome</keyword>
<keyword id="KW-0735">Signal-anchor</keyword>
<keyword id="KW-0812">Transmembrane</keyword>
<keyword id="KW-1133">Transmembrane helix</keyword>
<protein>
    <recommendedName>
        <fullName>Signal peptidase complex catalytic subunit SEC11</fullName>
        <ecNumber evidence="1">3.4.21.89</ecNumber>
    </recommendedName>
    <alternativeName>
        <fullName>Signal peptidase I</fullName>
    </alternativeName>
</protein>
<accession>F0UDD2</accession>
<dbReference type="EC" id="3.4.21.89" evidence="1"/>
<dbReference type="EMBL" id="DS990637">
    <property type="protein sequence ID" value="EGC43516.1"/>
    <property type="molecule type" value="Genomic_DNA"/>
</dbReference>
<dbReference type="SMR" id="F0UDD2"/>
<dbReference type="STRING" id="544711.F0UDD2"/>
<dbReference type="GlyCosmos" id="F0UDD2">
    <property type="glycosylation" value="2 sites, No reported glycans"/>
</dbReference>
<dbReference type="HOGENOM" id="CLU_089996_0_0_1"/>
<dbReference type="OMA" id="ILMNEYP"/>
<dbReference type="OrthoDB" id="10257561at2759"/>
<dbReference type="Proteomes" id="UP000008142">
    <property type="component" value="Unassembled WGS sequence"/>
</dbReference>
<dbReference type="GO" id="GO:0005787">
    <property type="term" value="C:signal peptidase complex"/>
    <property type="evidence" value="ECO:0007669"/>
    <property type="project" value="TreeGrafter"/>
</dbReference>
<dbReference type="GO" id="GO:0004252">
    <property type="term" value="F:serine-type endopeptidase activity"/>
    <property type="evidence" value="ECO:0007669"/>
    <property type="project" value="UniProtKB-EC"/>
</dbReference>
<dbReference type="GO" id="GO:0006465">
    <property type="term" value="P:signal peptide processing"/>
    <property type="evidence" value="ECO:0007669"/>
    <property type="project" value="InterPro"/>
</dbReference>
<dbReference type="CDD" id="cd06530">
    <property type="entry name" value="S26_SPase_I"/>
    <property type="match status" value="1"/>
</dbReference>
<dbReference type="InterPro" id="IPR036286">
    <property type="entry name" value="LexA/Signal_pep-like_sf"/>
</dbReference>
<dbReference type="InterPro" id="IPR019756">
    <property type="entry name" value="Pept_S26A_signal_pept_1_Ser-AS"/>
</dbReference>
<dbReference type="InterPro" id="IPR019533">
    <property type="entry name" value="Peptidase_S26"/>
</dbReference>
<dbReference type="InterPro" id="IPR001733">
    <property type="entry name" value="Peptidase_S26B"/>
</dbReference>
<dbReference type="NCBIfam" id="TIGR02228">
    <property type="entry name" value="sigpep_I_arch"/>
    <property type="match status" value="1"/>
</dbReference>
<dbReference type="PANTHER" id="PTHR10806">
    <property type="entry name" value="SIGNAL PEPTIDASE COMPLEX CATALYTIC SUBUNIT SEC11"/>
    <property type="match status" value="1"/>
</dbReference>
<dbReference type="PANTHER" id="PTHR10806:SF6">
    <property type="entry name" value="SIGNAL PEPTIDASE COMPLEX CATALYTIC SUBUNIT SEC11"/>
    <property type="match status" value="1"/>
</dbReference>
<dbReference type="PRINTS" id="PR00728">
    <property type="entry name" value="SIGNALPTASE"/>
</dbReference>
<dbReference type="SUPFAM" id="SSF51306">
    <property type="entry name" value="LexA/Signal peptidase"/>
    <property type="match status" value="1"/>
</dbReference>
<dbReference type="PROSITE" id="PS00501">
    <property type="entry name" value="SPASE_I_1"/>
    <property type="match status" value="1"/>
</dbReference>
<name>SEC11_AJEC8</name>
<gene>
    <name type="primary">SEC11</name>
    <name type="ORF">HCEG_02731</name>
</gene>
<organism>
    <name type="scientific">Ajellomyces capsulatus (strain H88)</name>
    <name type="common">Darling's disease fungus</name>
    <name type="synonym">Histoplasma capsulatum</name>
    <dbReference type="NCBI Taxonomy" id="544711"/>
    <lineage>
        <taxon>Eukaryota</taxon>
        <taxon>Fungi</taxon>
        <taxon>Dikarya</taxon>
        <taxon>Ascomycota</taxon>
        <taxon>Pezizomycotina</taxon>
        <taxon>Eurotiomycetes</taxon>
        <taxon>Eurotiomycetidae</taxon>
        <taxon>Onygenales</taxon>
        <taxon>Ajellomycetaceae</taxon>
        <taxon>Histoplasma</taxon>
    </lineage>
</organism>
<sequence length="187" mass="20710">MLSSLSPYMANPRNTLSQVLNFGLVLSSAFMVWKTLSVITNSTSPVVVVLSGSMEPAFQRGDLLFLWNRSPRVDVGEIVVYNVQGKDIPIVHRVMRVFPDVPTTGGKDVESVEASQKLLTKGDNNLSDDTELYAPGQEFLDRKTDLMGSVRGYVPAIGYVTIMLSEHPWLKSVLLGFMGLMVMLQRE</sequence>
<feature type="chain" id="PRO_0000412308" description="Signal peptidase complex catalytic subunit SEC11">
    <location>
        <begin position="1"/>
        <end position="187"/>
    </location>
</feature>
<feature type="topological domain" description="Cytoplasmic" evidence="3">
    <location>
        <begin position="1"/>
        <end position="14"/>
    </location>
</feature>
<feature type="transmembrane region" description="Helical; Signal-anchor for type II membrane protein" evidence="3">
    <location>
        <begin position="15"/>
        <end position="33"/>
    </location>
</feature>
<feature type="topological domain" description="Lumenal" evidence="3">
    <location>
        <begin position="34"/>
        <end position="187"/>
    </location>
</feature>
<feature type="region of interest" description="C-terminal short (CTS) helix" evidence="2">
    <location>
        <begin position="173"/>
        <end position="184"/>
    </location>
</feature>
<feature type="active site" description="Charge relay system" evidence="1">
    <location>
        <position position="53"/>
    </location>
</feature>
<feature type="active site" description="Charge relay system" evidence="1">
    <location>
        <position position="92"/>
    </location>
</feature>
<feature type="active site" description="Charge relay system" evidence="1">
    <location>
        <position position="129"/>
    </location>
</feature>
<feature type="glycosylation site" description="N-linked (GlcNAc...) asparagine" evidence="3">
    <location>
        <position position="41"/>
    </location>
</feature>
<feature type="glycosylation site" description="N-linked (GlcNAc...) asparagine" evidence="3">
    <location>
        <position position="125"/>
    </location>
</feature>
<evidence type="ECO:0000250" key="1">
    <source>
        <dbReference type="UniProtKB" id="P15367"/>
    </source>
</evidence>
<evidence type="ECO:0000250" key="2">
    <source>
        <dbReference type="UniProtKB" id="P67812"/>
    </source>
</evidence>
<evidence type="ECO:0000255" key="3"/>
<evidence type="ECO:0000305" key="4"/>
<comment type="function">
    <text evidence="1 2">Catalytic component of the signal peptidase complex (SPC) which catalyzes the cleavage of N-terminal signal sequences from nascent proteins as they are translocated into the lumen of the endoplasmic reticulum (By similarity). Specifically cleaves N-terminal signal peptides that contain a hydrophobic alpha-helix (h-region) shorter than 18-20 amino acids (By similarity).</text>
</comment>
<comment type="catalytic activity">
    <reaction evidence="1">
        <text>Cleavage of hydrophobic, N-terminal signal or leader sequences from secreted and periplasmic proteins.</text>
        <dbReference type="EC" id="3.4.21.89"/>
    </reaction>
</comment>
<comment type="subunit">
    <text evidence="1 2">Component of the signal peptidase complex (SPC) composed of a catalytic subunit SEC11 and three accessory subunits SPC1, SPC2 and SPC3 (By similarity). The complex induces a local thinning of the ER membrane which is used to measure the length of the signal peptide (SP) h-region of protein substrates. This ensures the selectivity of the complex towards h-regions shorter than 18-20 amino acids (By similarity). SPC associates with the translocon complex (By similarity).</text>
</comment>
<comment type="subcellular location">
    <subcellularLocation>
        <location evidence="1">Endoplasmic reticulum membrane</location>
        <topology evidence="1">Single-pass type II membrane protein</topology>
    </subcellularLocation>
</comment>
<comment type="domain">
    <text evidence="2">The C-terminal short (CTS) helix is essential for catalytic activity. It may be accommodated as a transmembrane helix in the thinned membrane environment of the complex, similarly to the signal peptide in the complex substrates.</text>
</comment>
<comment type="similarity">
    <text evidence="4">Belongs to the peptidase S26B family.</text>
</comment>
<proteinExistence type="inferred from homology"/>
<reference key="1">
    <citation type="submission" date="2008-07" db="EMBL/GenBank/DDBJ databases">
        <title>Annotation of Ajellomyces capsulatus strain H88.</title>
        <authorList>
            <person name="Champion M."/>
            <person name="Cuomo C."/>
            <person name="Ma L.-J."/>
            <person name="Henn M.R."/>
            <person name="Sil A."/>
            <person name="Goldman B."/>
            <person name="Young S.K."/>
            <person name="Kodira C.D."/>
            <person name="Zeng Q."/>
            <person name="Koehrsen M."/>
            <person name="Alvarado L."/>
            <person name="Berlin A."/>
            <person name="Borenstein D."/>
            <person name="Chen Z."/>
            <person name="Engels R."/>
            <person name="Freedman E."/>
            <person name="Gellesch M."/>
            <person name="Goldberg J."/>
            <person name="Griggs A."/>
            <person name="Gujja S."/>
            <person name="Heiman D."/>
            <person name="Hepburn T."/>
            <person name="Howarth C."/>
            <person name="Jen D."/>
            <person name="Larson L."/>
            <person name="Lewis B."/>
            <person name="Mehta T."/>
            <person name="Park D."/>
            <person name="Pearson M."/>
            <person name="Roberts A."/>
            <person name="Saif S."/>
            <person name="Shea T."/>
            <person name="Shenoy N."/>
            <person name="Sisk P."/>
            <person name="Stolte C."/>
            <person name="Sykes S."/>
            <person name="Walk T."/>
            <person name="White J."/>
            <person name="Yandava C."/>
            <person name="Klein B."/>
            <person name="McEwen J.G."/>
            <person name="Puccia R."/>
            <person name="Goldman G.H."/>
            <person name="Felipe M.S."/>
            <person name="Nino-Vega G."/>
            <person name="San-Blas G."/>
            <person name="Taylor J."/>
            <person name="Mendoza L."/>
            <person name="Galagan J."/>
            <person name="Nusbaum C."/>
            <person name="Birren B."/>
        </authorList>
    </citation>
    <scope>NUCLEOTIDE SEQUENCE [LARGE SCALE GENOMIC DNA]</scope>
    <source>
        <strain>H88</strain>
    </source>
</reference>